<sequence length="361" mass="40273">MPGKELSDPCVDCRDAEAILTLRRRRLCKDCYIKFVSYKVFKRMENYRLNRGFAKDKPCKLLFPLSYGLSSSVLLHMLHDQLEVQRSKVHGSPGFDLHVLIIEPSTISPSNPAHDEGFELAQKCFPLCSFTKVPFHSIFALVPDIKETMSQFAGKGFEDDPSLSDAERLNAFRSCIATSTSKADVDHILMNRLIVAFAKQMDCQAIIWGDSDSRLAAKTLANVAKGRGSSVIWQVSDGMSPFGLEFNFPLRDLFTAELRDYASFFPELTKLIVPDEPLPANTLTKNLSIDELMMRYVLTQGEKYPGVMLNVTRTANKLDVSQMPANLSHCTFCAAPLMNEVGGGHTQFCYACARSRPSTSS</sequence>
<dbReference type="EMBL" id="BA000053">
    <property type="protein sequence ID" value="BAE62948.1"/>
    <property type="molecule type" value="Genomic_DNA"/>
</dbReference>
<dbReference type="RefSeq" id="XP_001824081.1">
    <property type="nucleotide sequence ID" value="XM_001824029.1"/>
</dbReference>
<dbReference type="SMR" id="Q2U667"/>
<dbReference type="STRING" id="510516.Q2U667"/>
<dbReference type="EnsemblFungi" id="BAE62948">
    <property type="protein sequence ID" value="BAE62948"/>
    <property type="gene ID" value="AO090120000360"/>
</dbReference>
<dbReference type="GeneID" id="5996340"/>
<dbReference type="KEGG" id="aor:AO090120000360"/>
<dbReference type="VEuPathDB" id="FungiDB:AO090120000360"/>
<dbReference type="HOGENOM" id="CLU_024534_3_0_1"/>
<dbReference type="OMA" id="KQRKQMM"/>
<dbReference type="OrthoDB" id="31386at5052"/>
<dbReference type="UniPathway" id="UPA00988"/>
<dbReference type="Proteomes" id="UP000006564">
    <property type="component" value="Chromosome 5"/>
</dbReference>
<dbReference type="GO" id="GO:0005829">
    <property type="term" value="C:cytosol"/>
    <property type="evidence" value="ECO:0000250"/>
    <property type="project" value="UniProtKB"/>
</dbReference>
<dbReference type="GO" id="GO:0016779">
    <property type="term" value="F:nucleotidyltransferase activity"/>
    <property type="evidence" value="ECO:0007669"/>
    <property type="project" value="UniProtKB-UniRule"/>
</dbReference>
<dbReference type="GO" id="GO:0016783">
    <property type="term" value="F:sulfurtransferase activity"/>
    <property type="evidence" value="ECO:0007669"/>
    <property type="project" value="TreeGrafter"/>
</dbReference>
<dbReference type="GO" id="GO:0000049">
    <property type="term" value="F:tRNA binding"/>
    <property type="evidence" value="ECO:0007669"/>
    <property type="project" value="InterPro"/>
</dbReference>
<dbReference type="GO" id="GO:0032447">
    <property type="term" value="P:protein urmylation"/>
    <property type="evidence" value="ECO:0007669"/>
    <property type="project" value="UniProtKB-UniRule"/>
</dbReference>
<dbReference type="GO" id="GO:0034227">
    <property type="term" value="P:tRNA thio-modification"/>
    <property type="evidence" value="ECO:0000250"/>
    <property type="project" value="UniProtKB"/>
</dbReference>
<dbReference type="GO" id="GO:0002143">
    <property type="term" value="P:tRNA wobble position uridine thiolation"/>
    <property type="evidence" value="ECO:0007669"/>
    <property type="project" value="TreeGrafter"/>
</dbReference>
<dbReference type="GO" id="GO:0002098">
    <property type="term" value="P:tRNA wobble uridine modification"/>
    <property type="evidence" value="ECO:0000250"/>
    <property type="project" value="UniProtKB"/>
</dbReference>
<dbReference type="FunFam" id="3.40.50.620:FF:000143">
    <property type="entry name" value="Cytoplasmic tRNA 2-thiolation protein 2"/>
    <property type="match status" value="1"/>
</dbReference>
<dbReference type="Gene3D" id="3.40.50.620">
    <property type="entry name" value="HUPs"/>
    <property type="match status" value="1"/>
</dbReference>
<dbReference type="HAMAP" id="MF_03054">
    <property type="entry name" value="CTU2"/>
    <property type="match status" value="1"/>
</dbReference>
<dbReference type="InterPro" id="IPR019407">
    <property type="entry name" value="CTU2"/>
</dbReference>
<dbReference type="InterPro" id="IPR014729">
    <property type="entry name" value="Rossmann-like_a/b/a_fold"/>
</dbReference>
<dbReference type="PANTHER" id="PTHR20882">
    <property type="entry name" value="CYTOPLASMIC TRNA 2-THIOLATION PROTEIN 2"/>
    <property type="match status" value="1"/>
</dbReference>
<dbReference type="PANTHER" id="PTHR20882:SF14">
    <property type="entry name" value="CYTOPLASMIC TRNA 2-THIOLATION PROTEIN 2"/>
    <property type="match status" value="1"/>
</dbReference>
<dbReference type="Pfam" id="PF10288">
    <property type="entry name" value="CTU2"/>
    <property type="match status" value="1"/>
</dbReference>
<dbReference type="SUPFAM" id="SSF52402">
    <property type="entry name" value="Adenine nucleotide alpha hydrolases-like"/>
    <property type="match status" value="1"/>
</dbReference>
<proteinExistence type="inferred from homology"/>
<feature type="chain" id="PRO_0000369291" description="Cytoplasmic tRNA 2-thiolation protein 2">
    <location>
        <begin position="1"/>
        <end position="361"/>
    </location>
</feature>
<keyword id="KW-0963">Cytoplasm</keyword>
<keyword id="KW-1185">Reference proteome</keyword>
<keyword id="KW-0819">tRNA processing</keyword>
<comment type="function">
    <text evidence="1">Plays a central role in 2-thiolation of mcm(5)S(2)U at tRNA wobble positions of tRNA(Lys), tRNA(Glu) and tRNA(Gln). May act by forming a heterodimer with ncs6 that ligates sulfur from thiocarboxylated urm1 onto the uridine of tRNAs at wobble position. Prior mcm(5) tRNA modification by the elongator complex is required for 2-thiolation. May also be involved in protein urmylation.</text>
</comment>
<comment type="pathway">
    <text evidence="1">tRNA modification; 5-methoxycarbonylmethyl-2-thiouridine-tRNA biosynthesis.</text>
</comment>
<comment type="subcellular location">
    <subcellularLocation>
        <location evidence="1">Cytoplasm</location>
    </subcellularLocation>
</comment>
<comment type="similarity">
    <text evidence="1">Belongs to the CTU2/NCS2 family.</text>
</comment>
<name>CTU2_ASPOR</name>
<protein>
    <recommendedName>
        <fullName evidence="1">Cytoplasmic tRNA 2-thiolation protein 2</fullName>
    </recommendedName>
</protein>
<evidence type="ECO:0000255" key="1">
    <source>
        <dbReference type="HAMAP-Rule" id="MF_03054"/>
    </source>
</evidence>
<organism>
    <name type="scientific">Aspergillus oryzae (strain ATCC 42149 / RIB 40)</name>
    <name type="common">Yellow koji mold</name>
    <dbReference type="NCBI Taxonomy" id="510516"/>
    <lineage>
        <taxon>Eukaryota</taxon>
        <taxon>Fungi</taxon>
        <taxon>Dikarya</taxon>
        <taxon>Ascomycota</taxon>
        <taxon>Pezizomycotina</taxon>
        <taxon>Eurotiomycetes</taxon>
        <taxon>Eurotiomycetidae</taxon>
        <taxon>Eurotiales</taxon>
        <taxon>Aspergillaceae</taxon>
        <taxon>Aspergillus</taxon>
        <taxon>Aspergillus subgen. Circumdati</taxon>
    </lineage>
</organism>
<gene>
    <name type="primary">ncs2</name>
    <name type="synonym">ctu2</name>
    <name type="ORF">AO090120000360</name>
</gene>
<accession>Q2U667</accession>
<reference key="1">
    <citation type="journal article" date="2005" name="Nature">
        <title>Genome sequencing and analysis of Aspergillus oryzae.</title>
        <authorList>
            <person name="Machida M."/>
            <person name="Asai K."/>
            <person name="Sano M."/>
            <person name="Tanaka T."/>
            <person name="Kumagai T."/>
            <person name="Terai G."/>
            <person name="Kusumoto K."/>
            <person name="Arima T."/>
            <person name="Akita O."/>
            <person name="Kashiwagi Y."/>
            <person name="Abe K."/>
            <person name="Gomi K."/>
            <person name="Horiuchi H."/>
            <person name="Kitamoto K."/>
            <person name="Kobayashi T."/>
            <person name="Takeuchi M."/>
            <person name="Denning D.W."/>
            <person name="Galagan J.E."/>
            <person name="Nierman W.C."/>
            <person name="Yu J."/>
            <person name="Archer D.B."/>
            <person name="Bennett J.W."/>
            <person name="Bhatnagar D."/>
            <person name="Cleveland T.E."/>
            <person name="Fedorova N.D."/>
            <person name="Gotoh O."/>
            <person name="Horikawa H."/>
            <person name="Hosoyama A."/>
            <person name="Ichinomiya M."/>
            <person name="Igarashi R."/>
            <person name="Iwashita K."/>
            <person name="Juvvadi P.R."/>
            <person name="Kato M."/>
            <person name="Kato Y."/>
            <person name="Kin T."/>
            <person name="Kokubun A."/>
            <person name="Maeda H."/>
            <person name="Maeyama N."/>
            <person name="Maruyama J."/>
            <person name="Nagasaki H."/>
            <person name="Nakajima T."/>
            <person name="Oda K."/>
            <person name="Okada K."/>
            <person name="Paulsen I."/>
            <person name="Sakamoto K."/>
            <person name="Sawano T."/>
            <person name="Takahashi M."/>
            <person name="Takase K."/>
            <person name="Terabayashi Y."/>
            <person name="Wortman J.R."/>
            <person name="Yamada O."/>
            <person name="Yamagata Y."/>
            <person name="Anazawa H."/>
            <person name="Hata Y."/>
            <person name="Koide Y."/>
            <person name="Komori T."/>
            <person name="Koyama Y."/>
            <person name="Minetoki T."/>
            <person name="Suharnan S."/>
            <person name="Tanaka A."/>
            <person name="Isono K."/>
            <person name="Kuhara S."/>
            <person name="Ogasawara N."/>
            <person name="Kikuchi H."/>
        </authorList>
    </citation>
    <scope>NUCLEOTIDE SEQUENCE [LARGE SCALE GENOMIC DNA]</scope>
    <source>
        <strain>ATCC 42149 / RIB 40</strain>
    </source>
</reference>